<comment type="subunit">
    <text evidence="1">Part of the 50S ribosomal subunit. Contacts protein L32.</text>
</comment>
<comment type="similarity">
    <text evidence="1">Belongs to the bacterial ribosomal protein bL17 family.</text>
</comment>
<keyword id="KW-0687">Ribonucleoprotein</keyword>
<keyword id="KW-0689">Ribosomal protein</keyword>
<protein>
    <recommendedName>
        <fullName evidence="1">Large ribosomal subunit protein bL17</fullName>
    </recommendedName>
    <alternativeName>
        <fullName evidence="2">50S ribosomal protein L17</fullName>
    </alternativeName>
</protein>
<sequence length="125" mass="13994">MRHRNSGVKLGRTSSHRKAMFQNLANSLFEHELIKTTLPKAKELRRVAEPLITLAKNDTVANRRLAFARTRNAATVGKLFTVLGPRYKERNGGYLRVLKAGFRAGDAAPMAYVELVDREVNTSAE</sequence>
<gene>
    <name evidence="1" type="primary">rplQ</name>
    <name type="ordered locus">ABAYE0434</name>
</gene>
<dbReference type="EMBL" id="CU459141">
    <property type="protein sequence ID" value="CAM85408.1"/>
    <property type="molecule type" value="Genomic_DNA"/>
</dbReference>
<dbReference type="RefSeq" id="WP_001216380.1">
    <property type="nucleotide sequence ID" value="NZ_JBDGFB010000011.1"/>
</dbReference>
<dbReference type="SMR" id="B0V6U8"/>
<dbReference type="EnsemblBacteria" id="CAM85408">
    <property type="protein sequence ID" value="CAM85408"/>
    <property type="gene ID" value="ABAYE0434"/>
</dbReference>
<dbReference type="GeneID" id="92895291"/>
<dbReference type="KEGG" id="aby:ABAYE0434"/>
<dbReference type="HOGENOM" id="CLU_074407_2_0_6"/>
<dbReference type="GO" id="GO:0022625">
    <property type="term" value="C:cytosolic large ribosomal subunit"/>
    <property type="evidence" value="ECO:0007669"/>
    <property type="project" value="TreeGrafter"/>
</dbReference>
<dbReference type="GO" id="GO:0003735">
    <property type="term" value="F:structural constituent of ribosome"/>
    <property type="evidence" value="ECO:0007669"/>
    <property type="project" value="InterPro"/>
</dbReference>
<dbReference type="GO" id="GO:0006412">
    <property type="term" value="P:translation"/>
    <property type="evidence" value="ECO:0007669"/>
    <property type="project" value="UniProtKB-UniRule"/>
</dbReference>
<dbReference type="FunFam" id="3.90.1030.10:FF:000001">
    <property type="entry name" value="50S ribosomal protein L17"/>
    <property type="match status" value="1"/>
</dbReference>
<dbReference type="Gene3D" id="3.90.1030.10">
    <property type="entry name" value="Ribosomal protein L17"/>
    <property type="match status" value="1"/>
</dbReference>
<dbReference type="HAMAP" id="MF_01368">
    <property type="entry name" value="Ribosomal_bL17"/>
    <property type="match status" value="1"/>
</dbReference>
<dbReference type="InterPro" id="IPR000456">
    <property type="entry name" value="Ribosomal_bL17"/>
</dbReference>
<dbReference type="InterPro" id="IPR047859">
    <property type="entry name" value="Ribosomal_bL17_CS"/>
</dbReference>
<dbReference type="InterPro" id="IPR036373">
    <property type="entry name" value="Ribosomal_bL17_sf"/>
</dbReference>
<dbReference type="NCBIfam" id="TIGR00059">
    <property type="entry name" value="L17"/>
    <property type="match status" value="1"/>
</dbReference>
<dbReference type="PANTHER" id="PTHR14413:SF16">
    <property type="entry name" value="LARGE RIBOSOMAL SUBUNIT PROTEIN BL17M"/>
    <property type="match status" value="1"/>
</dbReference>
<dbReference type="PANTHER" id="PTHR14413">
    <property type="entry name" value="RIBOSOMAL PROTEIN L17"/>
    <property type="match status" value="1"/>
</dbReference>
<dbReference type="Pfam" id="PF01196">
    <property type="entry name" value="Ribosomal_L17"/>
    <property type="match status" value="1"/>
</dbReference>
<dbReference type="SUPFAM" id="SSF64263">
    <property type="entry name" value="Prokaryotic ribosomal protein L17"/>
    <property type="match status" value="1"/>
</dbReference>
<dbReference type="PROSITE" id="PS01167">
    <property type="entry name" value="RIBOSOMAL_L17"/>
    <property type="match status" value="1"/>
</dbReference>
<organism>
    <name type="scientific">Acinetobacter baumannii (strain AYE)</name>
    <dbReference type="NCBI Taxonomy" id="509173"/>
    <lineage>
        <taxon>Bacteria</taxon>
        <taxon>Pseudomonadati</taxon>
        <taxon>Pseudomonadota</taxon>
        <taxon>Gammaproteobacteria</taxon>
        <taxon>Moraxellales</taxon>
        <taxon>Moraxellaceae</taxon>
        <taxon>Acinetobacter</taxon>
        <taxon>Acinetobacter calcoaceticus/baumannii complex</taxon>
    </lineage>
</organism>
<accession>B0V6U8</accession>
<feature type="chain" id="PRO_1000144362" description="Large ribosomal subunit protein bL17">
    <location>
        <begin position="1"/>
        <end position="125"/>
    </location>
</feature>
<proteinExistence type="inferred from homology"/>
<name>RL17_ACIBY</name>
<reference key="1">
    <citation type="journal article" date="2008" name="PLoS ONE">
        <title>Comparative analysis of Acinetobacters: three genomes for three lifestyles.</title>
        <authorList>
            <person name="Vallenet D."/>
            <person name="Nordmann P."/>
            <person name="Barbe V."/>
            <person name="Poirel L."/>
            <person name="Mangenot S."/>
            <person name="Bataille E."/>
            <person name="Dossat C."/>
            <person name="Gas S."/>
            <person name="Kreimeyer A."/>
            <person name="Lenoble P."/>
            <person name="Oztas S."/>
            <person name="Poulain J."/>
            <person name="Segurens B."/>
            <person name="Robert C."/>
            <person name="Abergel C."/>
            <person name="Claverie J.-M."/>
            <person name="Raoult D."/>
            <person name="Medigue C."/>
            <person name="Weissenbach J."/>
            <person name="Cruveiller S."/>
        </authorList>
    </citation>
    <scope>NUCLEOTIDE SEQUENCE [LARGE SCALE GENOMIC DNA]</scope>
    <source>
        <strain>AYE</strain>
    </source>
</reference>
<evidence type="ECO:0000255" key="1">
    <source>
        <dbReference type="HAMAP-Rule" id="MF_01368"/>
    </source>
</evidence>
<evidence type="ECO:0000305" key="2"/>